<accession>Q82WP8</accession>
<dbReference type="EMBL" id="AL954747">
    <property type="protein sequence ID" value="CAD84526.1"/>
    <property type="molecule type" value="Genomic_DNA"/>
</dbReference>
<dbReference type="RefSeq" id="WP_011111241.1">
    <property type="nucleotide sequence ID" value="NC_004757.1"/>
</dbReference>
<dbReference type="SMR" id="Q82WP8"/>
<dbReference type="STRING" id="228410.NE0615"/>
<dbReference type="GeneID" id="87103814"/>
<dbReference type="KEGG" id="neu:NE0615"/>
<dbReference type="eggNOG" id="COG2913">
    <property type="taxonomic scope" value="Bacteria"/>
</dbReference>
<dbReference type="HOGENOM" id="CLU_083835_3_1_4"/>
<dbReference type="OrthoDB" id="9808250at2"/>
<dbReference type="PhylomeDB" id="Q82WP8"/>
<dbReference type="Proteomes" id="UP000001416">
    <property type="component" value="Chromosome"/>
</dbReference>
<dbReference type="GO" id="GO:1990063">
    <property type="term" value="C:Bam protein complex"/>
    <property type="evidence" value="ECO:0007669"/>
    <property type="project" value="TreeGrafter"/>
</dbReference>
<dbReference type="GO" id="GO:0030674">
    <property type="term" value="F:protein-macromolecule adaptor activity"/>
    <property type="evidence" value="ECO:0007669"/>
    <property type="project" value="TreeGrafter"/>
</dbReference>
<dbReference type="GO" id="GO:0043165">
    <property type="term" value="P:Gram-negative-bacterium-type cell outer membrane assembly"/>
    <property type="evidence" value="ECO:0007669"/>
    <property type="project" value="UniProtKB-UniRule"/>
</dbReference>
<dbReference type="GO" id="GO:0051205">
    <property type="term" value="P:protein insertion into membrane"/>
    <property type="evidence" value="ECO:0007669"/>
    <property type="project" value="UniProtKB-UniRule"/>
</dbReference>
<dbReference type="Gene3D" id="3.30.1450.10">
    <property type="match status" value="1"/>
</dbReference>
<dbReference type="HAMAP" id="MF_00925">
    <property type="entry name" value="OM_assembly_BamE"/>
    <property type="match status" value="1"/>
</dbReference>
<dbReference type="InterPro" id="IPR026592">
    <property type="entry name" value="BamE"/>
</dbReference>
<dbReference type="InterPro" id="IPR037873">
    <property type="entry name" value="BamE-like"/>
</dbReference>
<dbReference type="InterPro" id="IPR007450">
    <property type="entry name" value="BamE_dom"/>
</dbReference>
<dbReference type="PANTHER" id="PTHR37482">
    <property type="entry name" value="OUTER MEMBRANE PROTEIN ASSEMBLY FACTOR BAME"/>
    <property type="match status" value="1"/>
</dbReference>
<dbReference type="PANTHER" id="PTHR37482:SF1">
    <property type="entry name" value="OUTER MEMBRANE PROTEIN ASSEMBLY FACTOR BAME"/>
    <property type="match status" value="1"/>
</dbReference>
<dbReference type="Pfam" id="PF04355">
    <property type="entry name" value="BamE"/>
    <property type="match status" value="1"/>
</dbReference>
<gene>
    <name evidence="1" type="primary">bamE</name>
    <name type="synonym">omlA</name>
    <name type="ordered locus">NE0615</name>
</gene>
<organism>
    <name type="scientific">Nitrosomonas europaea (strain ATCC 19718 / CIP 103999 / KCTC 2705 / NBRC 14298)</name>
    <dbReference type="NCBI Taxonomy" id="228410"/>
    <lineage>
        <taxon>Bacteria</taxon>
        <taxon>Pseudomonadati</taxon>
        <taxon>Pseudomonadota</taxon>
        <taxon>Betaproteobacteria</taxon>
        <taxon>Nitrosomonadales</taxon>
        <taxon>Nitrosomonadaceae</taxon>
        <taxon>Nitrosomonas</taxon>
    </lineage>
</organism>
<keyword id="KW-0998">Cell outer membrane</keyword>
<keyword id="KW-0472">Membrane</keyword>
<keyword id="KW-1185">Reference proteome</keyword>
<keyword id="KW-0732">Signal</keyword>
<feature type="signal peptide" evidence="1">
    <location>
        <begin position="1"/>
        <end position="19"/>
    </location>
</feature>
<feature type="chain" id="PRO_0000417866" description="Outer membrane protein assembly factor BamE">
    <location>
        <begin position="20"/>
        <end position="164"/>
    </location>
</feature>
<feature type="region of interest" description="Disordered" evidence="2">
    <location>
        <begin position="111"/>
        <end position="164"/>
    </location>
</feature>
<feature type="compositionally biased region" description="Polar residues" evidence="2">
    <location>
        <begin position="117"/>
        <end position="140"/>
    </location>
</feature>
<feature type="compositionally biased region" description="Polar residues" evidence="2">
    <location>
        <begin position="153"/>
        <end position="164"/>
    </location>
</feature>
<comment type="function">
    <text evidence="1">Part of the outer membrane protein assembly complex, which is involved in assembly and insertion of beta-barrel proteins into the outer membrane.</text>
</comment>
<comment type="subunit">
    <text evidence="1">Part of the Bam complex.</text>
</comment>
<comment type="subcellular location">
    <subcellularLocation>
        <location evidence="1">Cell outer membrane</location>
    </subcellularLocation>
</comment>
<comment type="similarity">
    <text evidence="1">Belongs to the BamE family.</text>
</comment>
<proteinExistence type="inferred from homology"/>
<protein>
    <recommendedName>
        <fullName evidence="1">Outer membrane protein assembly factor BamE</fullName>
    </recommendedName>
</protein>
<name>BAME_NITEU</name>
<evidence type="ECO:0000255" key="1">
    <source>
        <dbReference type="HAMAP-Rule" id="MF_00925"/>
    </source>
</evidence>
<evidence type="ECO:0000256" key="2">
    <source>
        <dbReference type="SAM" id="MobiDB-lite"/>
    </source>
</evidence>
<sequence>MHAFFPRLLLLLLFLPLTHCTYLPSLPYKIDIQQGNVVTDEMVAKLKPGMTRSQVRFTLGTPLVMDIFHGDRWDYIYRTAPGGRVAEEKKLTVFFQDDRLSHIQGDFPQPPAFSESEPAQNFFSPEQTFTPAPDTDSNMNEEPDKKGTVNFLKENQTNFYKDNQ</sequence>
<reference key="1">
    <citation type="journal article" date="2003" name="J. Bacteriol.">
        <title>Complete genome sequence of the ammonia-oxidizing bacterium and obligate chemolithoautotroph Nitrosomonas europaea.</title>
        <authorList>
            <person name="Chain P."/>
            <person name="Lamerdin J.E."/>
            <person name="Larimer F.W."/>
            <person name="Regala W."/>
            <person name="Lao V."/>
            <person name="Land M.L."/>
            <person name="Hauser L."/>
            <person name="Hooper A.B."/>
            <person name="Klotz M.G."/>
            <person name="Norton J."/>
            <person name="Sayavedra-Soto L.A."/>
            <person name="Arciero D.M."/>
            <person name="Hommes N.G."/>
            <person name="Whittaker M.M."/>
            <person name="Arp D.J."/>
        </authorList>
    </citation>
    <scope>NUCLEOTIDE SEQUENCE [LARGE SCALE GENOMIC DNA]</scope>
    <source>
        <strain>ATCC 19718 / CIP 103999 / KCTC 2705 / NBRC 14298</strain>
    </source>
</reference>